<reference key="1">
    <citation type="journal article" date="2008" name="J. Bacteriol.">
        <title>Insights into the environmental resistance gene pool from the genome sequence of the multidrug-resistant environmental isolate Escherichia coli SMS-3-5.</title>
        <authorList>
            <person name="Fricke W.F."/>
            <person name="Wright M.S."/>
            <person name="Lindell A.H."/>
            <person name="Harkins D.M."/>
            <person name="Baker-Austin C."/>
            <person name="Ravel J."/>
            <person name="Stepanauskas R."/>
        </authorList>
    </citation>
    <scope>NUCLEOTIDE SEQUENCE [LARGE SCALE GENOMIC DNA]</scope>
    <source>
        <strain>SMS-3-5 / SECEC</strain>
    </source>
</reference>
<dbReference type="EMBL" id="CP000970">
    <property type="protein sequence ID" value="ACB18553.1"/>
    <property type="molecule type" value="Genomic_DNA"/>
</dbReference>
<dbReference type="RefSeq" id="WP_000845408.1">
    <property type="nucleotide sequence ID" value="NC_010498.1"/>
</dbReference>
<dbReference type="SMR" id="B1LGV8"/>
<dbReference type="KEGG" id="ecm:EcSMS35_0167"/>
<dbReference type="HOGENOM" id="CLU_015263_7_0_6"/>
<dbReference type="Proteomes" id="UP000007011">
    <property type="component" value="Chromosome"/>
</dbReference>
<dbReference type="GO" id="GO:0005886">
    <property type="term" value="C:plasma membrane"/>
    <property type="evidence" value="ECO:0007669"/>
    <property type="project" value="UniProtKB-SubCell"/>
</dbReference>
<dbReference type="GO" id="GO:0015297">
    <property type="term" value="F:antiporter activity"/>
    <property type="evidence" value="ECO:0007669"/>
    <property type="project" value="UniProtKB-UniRule"/>
</dbReference>
<dbReference type="GO" id="GO:0005247">
    <property type="term" value="F:voltage-gated chloride channel activity"/>
    <property type="evidence" value="ECO:0007669"/>
    <property type="project" value="TreeGrafter"/>
</dbReference>
<dbReference type="CDD" id="cd01031">
    <property type="entry name" value="EriC"/>
    <property type="match status" value="1"/>
</dbReference>
<dbReference type="FunFam" id="1.10.3080.10:FF:000005">
    <property type="entry name" value="H(+)/Cl(-) exchange transporter ClcA"/>
    <property type="match status" value="1"/>
</dbReference>
<dbReference type="Gene3D" id="1.10.3080.10">
    <property type="entry name" value="Clc chloride channel"/>
    <property type="match status" value="1"/>
</dbReference>
<dbReference type="HAMAP" id="MF_01128">
    <property type="entry name" value="CLC_ClcA"/>
    <property type="match status" value="1"/>
</dbReference>
<dbReference type="InterPro" id="IPR023861">
    <property type="entry name" value="Cl-channel_ClcA"/>
</dbReference>
<dbReference type="InterPro" id="IPR014743">
    <property type="entry name" value="Cl-channel_core"/>
</dbReference>
<dbReference type="InterPro" id="IPR001807">
    <property type="entry name" value="ClC"/>
</dbReference>
<dbReference type="NCBIfam" id="NF003640">
    <property type="entry name" value="PRK05277.1"/>
    <property type="match status" value="1"/>
</dbReference>
<dbReference type="PANTHER" id="PTHR45711">
    <property type="entry name" value="CHLORIDE CHANNEL PROTEIN"/>
    <property type="match status" value="1"/>
</dbReference>
<dbReference type="PANTHER" id="PTHR45711:SF6">
    <property type="entry name" value="CHLORIDE CHANNEL PROTEIN"/>
    <property type="match status" value="1"/>
</dbReference>
<dbReference type="Pfam" id="PF00654">
    <property type="entry name" value="Voltage_CLC"/>
    <property type="match status" value="1"/>
</dbReference>
<dbReference type="PRINTS" id="PR00762">
    <property type="entry name" value="CLCHANNEL"/>
</dbReference>
<dbReference type="SUPFAM" id="SSF81340">
    <property type="entry name" value="Clc chloride channel"/>
    <property type="match status" value="1"/>
</dbReference>
<comment type="function">
    <text evidence="1">Proton-coupled chloride transporter. Functions as antiport system and exchanges two chloride ions for 1 proton. Probably acts as an electrical shunt for an outwardly-directed proton pump that is linked to amino acid decarboxylation, as part of the extreme acid resistance (XAR) response.</text>
</comment>
<comment type="catalytic activity">
    <reaction evidence="1">
        <text>2 chloride(in) + H(+)(out) = 2 chloride(out) + H(+)(in)</text>
        <dbReference type="Rhea" id="RHEA:29567"/>
        <dbReference type="ChEBI" id="CHEBI:15378"/>
        <dbReference type="ChEBI" id="CHEBI:17996"/>
    </reaction>
</comment>
<comment type="subunit">
    <text evidence="1">Homodimer.</text>
</comment>
<comment type="subcellular location">
    <subcellularLocation>
        <location evidence="1">Cell inner membrane</location>
        <topology evidence="1">Multi-pass membrane protein</topology>
    </subcellularLocation>
</comment>
<comment type="similarity">
    <text evidence="1">Belongs to the chloride channel (TC 2.A.49) family. ClcA subfamily.</text>
</comment>
<gene>
    <name evidence="1" type="primary">clcA</name>
    <name evidence="1" type="synonym">eriC</name>
    <name type="ordered locus">EcSMS35_0167</name>
</gene>
<organism>
    <name type="scientific">Escherichia coli (strain SMS-3-5 / SECEC)</name>
    <dbReference type="NCBI Taxonomy" id="439855"/>
    <lineage>
        <taxon>Bacteria</taxon>
        <taxon>Pseudomonadati</taxon>
        <taxon>Pseudomonadota</taxon>
        <taxon>Gammaproteobacteria</taxon>
        <taxon>Enterobacterales</taxon>
        <taxon>Enterobacteriaceae</taxon>
        <taxon>Escherichia</taxon>
    </lineage>
</organism>
<name>CLCA_ECOSM</name>
<evidence type="ECO:0000255" key="1">
    <source>
        <dbReference type="HAMAP-Rule" id="MF_01128"/>
    </source>
</evidence>
<feature type="chain" id="PRO_1000137300" description="H(+)/Cl(-) exchange transporter ClcA">
    <location>
        <begin position="1"/>
        <end position="473"/>
    </location>
</feature>
<feature type="topological domain" description="Cytoplasmic" evidence="1">
    <location>
        <begin position="1"/>
        <end position="32"/>
    </location>
</feature>
<feature type="transmembrane region" description="Helical" evidence="1">
    <location>
        <begin position="33"/>
        <end position="69"/>
    </location>
</feature>
<feature type="topological domain" description="Periplasmic" evidence="1">
    <location>
        <begin position="70"/>
        <end position="76"/>
    </location>
</feature>
<feature type="transmembrane region" description="Helical" evidence="1">
    <location>
        <begin position="77"/>
        <end position="100"/>
    </location>
</feature>
<feature type="intramembrane region" description="Helical" evidence="1">
    <location>
        <begin position="109"/>
        <end position="116"/>
    </location>
</feature>
<feature type="topological domain" description="Cytoplasmic" evidence="1">
    <location>
        <begin position="117"/>
        <end position="123"/>
    </location>
</feature>
<feature type="transmembrane region" description="Helical" evidence="1">
    <location>
        <begin position="124"/>
        <end position="141"/>
    </location>
</feature>
<feature type="transmembrane region" description="Helical" evidence="1">
    <location>
        <begin position="148"/>
        <end position="166"/>
    </location>
</feature>
<feature type="topological domain" description="Cytoplasmic" evidence="1">
    <location>
        <begin position="167"/>
        <end position="176"/>
    </location>
</feature>
<feature type="intramembrane region" description="Helical" evidence="1">
    <location>
        <begin position="177"/>
        <end position="189"/>
    </location>
</feature>
<feature type="intramembrane region" description="Helical" evidence="1">
    <location>
        <begin position="193"/>
        <end position="201"/>
    </location>
</feature>
<feature type="topological domain" description="Cytoplasmic" evidence="1">
    <location>
        <begin position="202"/>
        <end position="214"/>
    </location>
</feature>
<feature type="transmembrane region" description="Helical" evidence="1">
    <location>
        <begin position="215"/>
        <end position="232"/>
    </location>
</feature>
<feature type="topological domain" description="Periplasmic" evidence="1">
    <location>
        <begin position="233"/>
        <end position="252"/>
    </location>
</feature>
<feature type="transmembrane region" description="Helical" evidence="1">
    <location>
        <begin position="253"/>
        <end position="281"/>
    </location>
</feature>
<feature type="topological domain" description="Cytoplasmic" evidence="1">
    <location>
        <begin position="282"/>
        <end position="287"/>
    </location>
</feature>
<feature type="transmembrane region" description="Helical" evidence="1">
    <location>
        <begin position="288"/>
        <end position="309"/>
    </location>
</feature>
<feature type="topological domain" description="Periplasmic" evidence="1">
    <location>
        <begin position="310"/>
        <end position="329"/>
    </location>
</feature>
<feature type="transmembrane region" description="Helical" evidence="1">
    <location>
        <begin position="330"/>
        <end position="349"/>
    </location>
</feature>
<feature type="transmembrane region" description="Helical" evidence="1">
    <location>
        <begin position="355"/>
        <end position="376"/>
    </location>
</feature>
<feature type="topological domain" description="Periplasmic" evidence="1">
    <location>
        <begin position="377"/>
        <end position="386"/>
    </location>
</feature>
<feature type="intramembrane region" description="Helical" evidence="1">
    <location>
        <begin position="387"/>
        <end position="401"/>
    </location>
</feature>
<feature type="intramembrane region" description="Note=Loop between two helices" evidence="1">
    <location>
        <begin position="402"/>
        <end position="404"/>
    </location>
</feature>
<feature type="intramembrane region" description="Helical" evidence="1">
    <location>
        <begin position="405"/>
        <end position="416"/>
    </location>
</feature>
<feature type="intramembrane region" description="Note=Loop between two helices" evidence="1">
    <location>
        <begin position="417"/>
        <end position="421"/>
    </location>
</feature>
<feature type="transmembrane region" description="Helical" evidence="1">
    <location>
        <begin position="422"/>
        <end position="438"/>
    </location>
</feature>
<feature type="topological domain" description="Cytoplasmic" evidence="1">
    <location>
        <begin position="439"/>
        <end position="473"/>
    </location>
</feature>
<feature type="short sequence motif" description="Selectivity filter part_1" evidence="1">
    <location>
        <begin position="106"/>
        <end position="110"/>
    </location>
</feature>
<feature type="short sequence motif" description="Selectivity filter part_2" evidence="1">
    <location>
        <begin position="146"/>
        <end position="150"/>
    </location>
</feature>
<feature type="short sequence motif" description="Selectivity filter part_3" evidence="1">
    <location>
        <begin position="355"/>
        <end position="359"/>
    </location>
</feature>
<feature type="binding site" evidence="1">
    <location>
        <position position="107"/>
    </location>
    <ligand>
        <name>chloride</name>
        <dbReference type="ChEBI" id="CHEBI:17996"/>
    </ligand>
</feature>
<feature type="binding site" evidence="1">
    <location>
        <position position="356"/>
    </location>
    <ligand>
        <name>chloride</name>
        <dbReference type="ChEBI" id="CHEBI:17996"/>
    </ligand>
</feature>
<feature type="binding site" evidence="1">
    <location>
        <position position="357"/>
    </location>
    <ligand>
        <name>chloride</name>
        <dbReference type="ChEBI" id="CHEBI:17996"/>
    </ligand>
</feature>
<feature type="binding site" evidence="1">
    <location>
        <position position="445"/>
    </location>
    <ligand>
        <name>chloride</name>
        <dbReference type="ChEBI" id="CHEBI:17996"/>
    </ligand>
</feature>
<feature type="site" description="Mediates proton transfer from the outer aqueous phase to the interior of the protein; involved in linking H(+) and Cl(-) transport" evidence="1">
    <location>
        <position position="148"/>
    </location>
</feature>
<feature type="site" description="Mediates proton transfer from the protein to the inner aqueous phase" evidence="1">
    <location>
        <position position="203"/>
    </location>
</feature>
<keyword id="KW-0050">Antiport</keyword>
<keyword id="KW-0997">Cell inner membrane</keyword>
<keyword id="KW-1003">Cell membrane</keyword>
<keyword id="KW-0868">Chloride</keyword>
<keyword id="KW-0406">Ion transport</keyword>
<keyword id="KW-0472">Membrane</keyword>
<keyword id="KW-0812">Transmembrane</keyword>
<keyword id="KW-1133">Transmembrane helix</keyword>
<keyword id="KW-0813">Transport</keyword>
<sequence>MKTDTPSLETPQAARLRRRQLIRQLLERDKTPLAILFMAAVVGTLVGLAAVAFDKGVAWLQNQRMGALVHTADNYPLLLTVAFLCSAVLAMFGYFLVRKYAPEAGGSGIPEIEGALEDQRPVRWWRVLPVKFFGGLGTLGGGMVLGREGPTVQIGGNIGRMVLDVFRLKGDEARHTLLATGAAAGLAAAFNAPLAGILFIIEEMRPQFRYTLISIKAVFIGVIMSTIMYRIFNHEVALIDVGKLSDAPLNTLWLYLILGIIFGIFGPIFNKWVLGMQDLLHRVHGGNITKWVLMGGAIGGLCGLLGFVAPATSGGGFNLIPIATAGNFSMGMLVFIFVARVITTLLCFSSGAPGGIFAPMLALGTVLGTAFGMVAVELFPQYHLEAGTFAIAGMGALLAASIRAPLTGIILVLEMTDNYQLILPMIITGLGATLLAQFTGGKPLYSAILARTLAKQEAEQLARSKAASASENT</sequence>
<accession>B1LGV8</accession>
<proteinExistence type="inferred from homology"/>
<protein>
    <recommendedName>
        <fullName evidence="1">H(+)/Cl(-) exchange transporter ClcA</fullName>
    </recommendedName>
</protein>